<keyword id="KW-1185">Reference proteome</keyword>
<accession>P0AAV3</accession>
<accession>P37343</accession>
<accession>P75755</accession>
<protein>
    <recommendedName>
        <fullName>Uncharacterized protein YbgE</fullName>
    </recommendedName>
</protein>
<proteinExistence type="predicted"/>
<gene>
    <name type="primary">ybgE</name>
    <name type="ordered locus">SF0562</name>
    <name type="ordered locus">S0575</name>
</gene>
<feature type="chain" id="PRO_0000168705" description="Uncharacterized protein YbgE">
    <location>
        <begin position="1"/>
        <end position="97"/>
    </location>
</feature>
<name>YBGE_SHIFL</name>
<organism>
    <name type="scientific">Shigella flexneri</name>
    <dbReference type="NCBI Taxonomy" id="623"/>
    <lineage>
        <taxon>Bacteria</taxon>
        <taxon>Pseudomonadati</taxon>
        <taxon>Pseudomonadota</taxon>
        <taxon>Gammaproteobacteria</taxon>
        <taxon>Enterobacterales</taxon>
        <taxon>Enterobacteriaceae</taxon>
        <taxon>Shigella</taxon>
    </lineage>
</organism>
<reference key="1">
    <citation type="journal article" date="2002" name="Nucleic Acids Res.">
        <title>Genome sequence of Shigella flexneri 2a: insights into pathogenicity through comparison with genomes of Escherichia coli K12 and O157.</title>
        <authorList>
            <person name="Jin Q."/>
            <person name="Yuan Z."/>
            <person name="Xu J."/>
            <person name="Wang Y."/>
            <person name="Shen Y."/>
            <person name="Lu W."/>
            <person name="Wang J."/>
            <person name="Liu H."/>
            <person name="Yang J."/>
            <person name="Yang F."/>
            <person name="Zhang X."/>
            <person name="Zhang J."/>
            <person name="Yang G."/>
            <person name="Wu H."/>
            <person name="Qu D."/>
            <person name="Dong J."/>
            <person name="Sun L."/>
            <person name="Xue Y."/>
            <person name="Zhao A."/>
            <person name="Gao Y."/>
            <person name="Zhu J."/>
            <person name="Kan B."/>
            <person name="Ding K."/>
            <person name="Chen S."/>
            <person name="Cheng H."/>
            <person name="Yao Z."/>
            <person name="He B."/>
            <person name="Chen R."/>
            <person name="Ma D."/>
            <person name="Qiang B."/>
            <person name="Wen Y."/>
            <person name="Hou Y."/>
            <person name="Yu J."/>
        </authorList>
    </citation>
    <scope>NUCLEOTIDE SEQUENCE [LARGE SCALE GENOMIC DNA]</scope>
    <source>
        <strain>301 / Serotype 2a</strain>
    </source>
</reference>
<reference key="2">
    <citation type="journal article" date="2003" name="Infect. Immun.">
        <title>Complete genome sequence and comparative genomics of Shigella flexneri serotype 2a strain 2457T.</title>
        <authorList>
            <person name="Wei J."/>
            <person name="Goldberg M.B."/>
            <person name="Burland V."/>
            <person name="Venkatesan M.M."/>
            <person name="Deng W."/>
            <person name="Fournier G."/>
            <person name="Mayhew G.F."/>
            <person name="Plunkett G. III"/>
            <person name="Rose D.J."/>
            <person name="Darling A."/>
            <person name="Mau B."/>
            <person name="Perna N.T."/>
            <person name="Payne S.M."/>
            <person name="Runyen-Janecky L.J."/>
            <person name="Zhou S."/>
            <person name="Schwartz D.C."/>
            <person name="Blattner F.R."/>
        </authorList>
    </citation>
    <scope>NUCLEOTIDE SEQUENCE [LARGE SCALE GENOMIC DNA]</scope>
    <source>
        <strain>ATCC 700930 / 2457T / Serotype 2a</strain>
    </source>
</reference>
<sequence length="97" mass="10932">MSKIIATLYAVMDKRPLRALSFVMALLLAGCMFWDPSRFAAKTSELEIWHGLLLMWAVCAGVIHGVGFRPQKVLWQGIFCPLLADIVLIVGLIFFFF</sequence>
<dbReference type="EMBL" id="AE005674">
    <property type="protein sequence ID" value="AAN42206.1"/>
    <property type="molecule type" value="Genomic_DNA"/>
</dbReference>
<dbReference type="EMBL" id="AE014073">
    <property type="protein sequence ID" value="AAP16079.1"/>
    <property type="molecule type" value="Genomic_DNA"/>
</dbReference>
<dbReference type="RefSeq" id="NP_706499.1">
    <property type="nucleotide sequence ID" value="NC_004337.2"/>
</dbReference>
<dbReference type="RefSeq" id="WP_000034602.1">
    <property type="nucleotide sequence ID" value="NZ_WPGW01000046.1"/>
</dbReference>
<dbReference type="SMR" id="P0AAV3"/>
<dbReference type="STRING" id="198214.SF0562"/>
<dbReference type="PaxDb" id="198214-SF0562"/>
<dbReference type="GeneID" id="1023513"/>
<dbReference type="GeneID" id="93776749"/>
<dbReference type="KEGG" id="sfl:SF0562"/>
<dbReference type="KEGG" id="sfx:S0575"/>
<dbReference type="PATRIC" id="fig|198214.7.peg.651"/>
<dbReference type="HOGENOM" id="CLU_156555_2_0_6"/>
<dbReference type="Proteomes" id="UP000001006">
    <property type="component" value="Chromosome"/>
</dbReference>
<dbReference type="Proteomes" id="UP000002673">
    <property type="component" value="Chromosome"/>
</dbReference>
<dbReference type="InterPro" id="IPR011846">
    <property type="entry name" value="Cyd_oper_YbgE"/>
</dbReference>
<dbReference type="NCBIfam" id="TIGR02112">
    <property type="entry name" value="cyd_oper_ybgE"/>
    <property type="match status" value="1"/>
</dbReference>
<dbReference type="NCBIfam" id="NF007881">
    <property type="entry name" value="PRK10588.1"/>
    <property type="match status" value="1"/>
</dbReference>
<dbReference type="Pfam" id="PF09600">
    <property type="entry name" value="Cyd_oper_YbgE"/>
    <property type="match status" value="1"/>
</dbReference>
<dbReference type="PROSITE" id="PS51257">
    <property type="entry name" value="PROKAR_LIPOPROTEIN"/>
    <property type="match status" value="1"/>
</dbReference>